<name>AQY22_YEAS1</name>
<dbReference type="EMBL" id="CH408054">
    <property type="protein sequence ID" value="EDV09268.1"/>
    <property type="molecule type" value="Genomic_DNA"/>
</dbReference>
<dbReference type="SMR" id="B3LTC5"/>
<dbReference type="HOGENOM" id="CLU_1750738_0_0_1"/>
<dbReference type="OrthoDB" id="8581at4893"/>
<dbReference type="Proteomes" id="UP000008335">
    <property type="component" value="Unassembled WGS sequence"/>
</dbReference>
<dbReference type="GO" id="GO:0005789">
    <property type="term" value="C:endoplasmic reticulum membrane"/>
    <property type="evidence" value="ECO:0007669"/>
    <property type="project" value="UniProtKB-SubCell"/>
</dbReference>
<dbReference type="GO" id="GO:0005886">
    <property type="term" value="C:plasma membrane"/>
    <property type="evidence" value="ECO:0007669"/>
    <property type="project" value="UniProtKB-SubCell"/>
</dbReference>
<dbReference type="FunFam" id="1.20.1080.10:FF:000049">
    <property type="entry name" value="Aquaporin-like protein 2"/>
    <property type="match status" value="1"/>
</dbReference>
<dbReference type="Gene3D" id="1.20.1080.10">
    <property type="entry name" value="Glycerol uptake facilitator protein"/>
    <property type="match status" value="1"/>
</dbReference>
<dbReference type="InterPro" id="IPR023271">
    <property type="entry name" value="Aquaporin-like"/>
</dbReference>
<dbReference type="SUPFAM" id="SSF81338">
    <property type="entry name" value="Aquaporin-like"/>
    <property type="match status" value="1"/>
</dbReference>
<reference key="1">
    <citation type="submission" date="2005-03" db="EMBL/GenBank/DDBJ databases">
        <title>Annotation of the Saccharomyces cerevisiae RM11-1a genome.</title>
        <authorList>
            <consortium name="The Broad Institute Genome Sequencing Platform"/>
            <person name="Birren B.W."/>
            <person name="Lander E.S."/>
            <person name="Galagan J.E."/>
            <person name="Nusbaum C."/>
            <person name="Devon K."/>
            <person name="Cuomo C."/>
            <person name="Jaffe D.B."/>
            <person name="Butler J."/>
            <person name="Alvarez P."/>
            <person name="Gnerre S."/>
            <person name="Grabherr M."/>
            <person name="Kleber M."/>
            <person name="Mauceli E.W."/>
            <person name="Brockman W."/>
            <person name="MacCallum I.A."/>
            <person name="Rounsley S."/>
            <person name="Young S.K."/>
            <person name="LaButti K."/>
            <person name="Pushparaj V."/>
            <person name="DeCaprio D."/>
            <person name="Crawford M."/>
            <person name="Koehrsen M."/>
            <person name="Engels R."/>
            <person name="Montgomery P."/>
            <person name="Pearson M."/>
            <person name="Howarth C."/>
            <person name="Larson L."/>
            <person name="Luoma S."/>
            <person name="White J."/>
            <person name="O'Leary S."/>
            <person name="Kodira C.D."/>
            <person name="Zeng Q."/>
            <person name="Yandava C."/>
            <person name="Alvarado L."/>
            <person name="Pratt S."/>
            <person name="Kruglyak L."/>
        </authorList>
    </citation>
    <scope>NUCLEOTIDE SEQUENCE [LARGE SCALE GENOMIC DNA]</scope>
    <source>
        <strain>RM11-1a</strain>
    </source>
</reference>
<accession>B3LTC5</accession>
<protein>
    <recommendedName>
        <fullName>Aquaporin-like protein 2</fullName>
    </recommendedName>
    <alternativeName>
        <fullName>Truncated aquaporin-2</fullName>
    </alternativeName>
</protein>
<feature type="chain" id="PRO_0000391652" description="Aquaporin-like protein 2">
    <location>
        <begin position="1"/>
        <end position="149"/>
    </location>
</feature>
<feature type="topological domain" description="Cytoplasmic" evidence="1">
    <location>
        <begin position="1"/>
        <end position="47"/>
    </location>
</feature>
<feature type="transmembrane region" description="Helical" evidence="2">
    <location>
        <begin position="48"/>
        <end position="68"/>
    </location>
</feature>
<feature type="topological domain" description="Extracellular" evidence="1">
    <location>
        <begin position="69"/>
        <end position="89"/>
    </location>
</feature>
<feature type="transmembrane region" description="Helical" evidence="2">
    <location>
        <begin position="90"/>
        <end position="110"/>
    </location>
</feature>
<feature type="topological domain" description="Cytoplasmic" evidence="1">
    <location>
        <begin position="111"/>
        <end position="149"/>
    </location>
</feature>
<feature type="region of interest" description="Disordered" evidence="3">
    <location>
        <begin position="1"/>
        <end position="35"/>
    </location>
</feature>
<organism>
    <name type="scientific">Saccharomyces cerevisiae (strain RM11-1a)</name>
    <name type="common">Baker's yeast</name>
    <dbReference type="NCBI Taxonomy" id="285006"/>
    <lineage>
        <taxon>Eukaryota</taxon>
        <taxon>Fungi</taxon>
        <taxon>Dikarya</taxon>
        <taxon>Ascomycota</taxon>
        <taxon>Saccharomycotina</taxon>
        <taxon>Saccharomycetes</taxon>
        <taxon>Saccharomycetales</taxon>
        <taxon>Saccharomycetaceae</taxon>
        <taxon>Saccharomyces</taxon>
    </lineage>
</organism>
<keyword id="KW-1003">Cell membrane</keyword>
<keyword id="KW-0256">Endoplasmic reticulum</keyword>
<keyword id="KW-0472">Membrane</keyword>
<keyword id="KW-0677">Repeat</keyword>
<keyword id="KW-0812">Transmembrane</keyword>
<keyword id="KW-1133">Transmembrane helix</keyword>
<keyword id="KW-0813">Transport</keyword>
<evidence type="ECO:0000250" key="1"/>
<evidence type="ECO:0000255" key="2"/>
<evidence type="ECO:0000256" key="3">
    <source>
        <dbReference type="SAM" id="MobiDB-lite"/>
    </source>
</evidence>
<evidence type="ECO:0000305" key="4"/>
<sequence length="149" mass="17010">MSNESNDLEKNISHLDPTGVDNAYIPPEQPETKHSRFNIDRDTLRNHFIAAVGEFCGTFMFLWCAYVICNVANHDVALTTEPEGSHPGQLIMIALGFGFSVMFSIWCFWWGFEPSRFSLFVFGQSHLSSQMCSDVVSSDHCWDGCWWCR</sequence>
<proteinExistence type="inferred from homology"/>
<gene>
    <name type="primary">AQY2-2</name>
    <name type="ORF">SCRG_04941</name>
</gene>
<comment type="function">
    <text evidence="1">Water channel required to facilitate the transport of water across membranes. Involved in freeze tolerance, osmotolerance and cell flocculation in liquid cultures. Is non-functional in most laboratory strains (By similarity).</text>
</comment>
<comment type="subcellular location">
    <subcellularLocation>
        <location evidence="1">Endoplasmic reticulum membrane</location>
        <topology>Multi-pass membrane protein</topology>
    </subcellularLocation>
    <subcellularLocation>
        <location evidence="1">Cell membrane</location>
        <topology>Multi-pass membrane protein</topology>
    </subcellularLocation>
</comment>
<comment type="induction">
    <text evidence="1">During exponential phase in rich medium and repressed in minimum medium, hyper-osmolar medium or in sporulating conditions.</text>
</comment>
<comment type="domain">
    <text>Aquaporins contain two tandem repeats each containing three membrane-spanning domains and a pore-forming loop with the signature motif Asn-Pro-Ala (NPA).</text>
</comment>
<comment type="similarity">
    <text evidence="4">Belongs to the MIP/aquaporin (TC 1.A.8) family.</text>
</comment>
<comment type="caution">
    <text evidence="4">This is a truncated version of aquaporin-2. A natural 11 bp deletion in position 109 leads to a frameshift, which disrupts the gene coding for this protein and produces two ORFs SCRG_04941 and SCRG_04940. A contiguous sequence for aquaporin-2 can be found in strain Sigma 1278B (AC P0CD89).</text>
</comment>